<evidence type="ECO:0000255" key="1">
    <source>
        <dbReference type="HAMAP-Rule" id="MF_02106"/>
    </source>
</evidence>
<evidence type="ECO:0000256" key="2">
    <source>
        <dbReference type="SAM" id="MobiDB-lite"/>
    </source>
</evidence>
<proteinExistence type="inferred from homology"/>
<reference key="1">
    <citation type="submission" date="2006-12" db="EMBL/GenBank/DDBJ databases">
        <title>Complete sequence of Mycobacterium vanbaalenii PYR-1.</title>
        <authorList>
            <consortium name="US DOE Joint Genome Institute"/>
            <person name="Copeland A."/>
            <person name="Lucas S."/>
            <person name="Lapidus A."/>
            <person name="Barry K."/>
            <person name="Detter J.C."/>
            <person name="Glavina del Rio T."/>
            <person name="Hammon N."/>
            <person name="Israni S."/>
            <person name="Dalin E."/>
            <person name="Tice H."/>
            <person name="Pitluck S."/>
            <person name="Singan V."/>
            <person name="Schmutz J."/>
            <person name="Larimer F."/>
            <person name="Land M."/>
            <person name="Hauser L."/>
            <person name="Kyrpides N."/>
            <person name="Anderson I.J."/>
            <person name="Miller C."/>
            <person name="Richardson P."/>
        </authorList>
    </citation>
    <scope>NUCLEOTIDE SEQUENCE [LARGE SCALE GENOMIC DNA]</scope>
    <source>
        <strain>DSM 7251 / JCM 13017 / BCRC 16820 / KCTC 9966 / NRRL B-24157 / PYR-1</strain>
    </source>
</reference>
<accession>A1TAP5</accession>
<sequence>MAQEQTKRGGGGGEDDDLTGSTAAGQERREKLTDETDDLLDEIDDVLEENAEDFVRAYVQKGGQ</sequence>
<dbReference type="EMBL" id="CP000511">
    <property type="protein sequence ID" value="ABM14245.1"/>
    <property type="molecule type" value="Genomic_DNA"/>
</dbReference>
<dbReference type="RefSeq" id="WP_011780649.1">
    <property type="nucleotide sequence ID" value="NZ_JACKSD010000223.1"/>
</dbReference>
<dbReference type="SMR" id="A1TAP5"/>
<dbReference type="STRING" id="350058.Mvan_3450"/>
<dbReference type="KEGG" id="mva:Mvan_3450"/>
<dbReference type="eggNOG" id="ENOG50333JS">
    <property type="taxonomic scope" value="Bacteria"/>
</dbReference>
<dbReference type="HOGENOM" id="CLU_183816_1_0_11"/>
<dbReference type="UniPathway" id="UPA00997"/>
<dbReference type="Proteomes" id="UP000009159">
    <property type="component" value="Chromosome"/>
</dbReference>
<dbReference type="GO" id="GO:0070628">
    <property type="term" value="F:proteasome binding"/>
    <property type="evidence" value="ECO:0007669"/>
    <property type="project" value="UniProtKB-UniRule"/>
</dbReference>
<dbReference type="GO" id="GO:0031386">
    <property type="term" value="F:protein tag activity"/>
    <property type="evidence" value="ECO:0007669"/>
    <property type="project" value="UniProtKB-UniRule"/>
</dbReference>
<dbReference type="GO" id="GO:0019941">
    <property type="term" value="P:modification-dependent protein catabolic process"/>
    <property type="evidence" value="ECO:0007669"/>
    <property type="project" value="UniProtKB-UniRule"/>
</dbReference>
<dbReference type="GO" id="GO:0010498">
    <property type="term" value="P:proteasomal protein catabolic process"/>
    <property type="evidence" value="ECO:0007669"/>
    <property type="project" value="UniProtKB-UniRule"/>
</dbReference>
<dbReference type="GO" id="GO:0070490">
    <property type="term" value="P:protein pupylation"/>
    <property type="evidence" value="ECO:0007669"/>
    <property type="project" value="UniProtKB-UniRule"/>
</dbReference>
<dbReference type="HAMAP" id="MF_02106">
    <property type="entry name" value="Pup"/>
    <property type="match status" value="1"/>
</dbReference>
<dbReference type="InterPro" id="IPR008515">
    <property type="entry name" value="Ubiquitin-like_Pup"/>
</dbReference>
<dbReference type="NCBIfam" id="TIGR03687">
    <property type="entry name" value="pupylate_cterm"/>
    <property type="match status" value="1"/>
</dbReference>
<dbReference type="Pfam" id="PF05639">
    <property type="entry name" value="Pup"/>
    <property type="match status" value="1"/>
</dbReference>
<gene>
    <name evidence="1" type="primary">pup</name>
    <name type="ordered locus">Mvan_3450</name>
</gene>
<feature type="chain" id="PRO_0000390600" description="Prokaryotic ubiquitin-like protein Pup">
    <location>
        <begin position="1"/>
        <end position="64"/>
    </location>
</feature>
<feature type="region of interest" description="Disordered" evidence="2">
    <location>
        <begin position="1"/>
        <end position="37"/>
    </location>
</feature>
<feature type="region of interest" description="ARC ATPase binding" evidence="1">
    <location>
        <begin position="21"/>
        <end position="58"/>
    </location>
</feature>
<feature type="coiled-coil region" evidence="1">
    <location>
        <begin position="23"/>
        <end position="52"/>
    </location>
</feature>
<feature type="modified residue" description="Deamidated glutamine" evidence="1">
    <location>
        <position position="64"/>
    </location>
</feature>
<feature type="cross-link" description="Isoglutamyl lysine isopeptide (Gln-Lys) (interchain with K-? in acceptor proteins)" evidence="1">
    <location>
        <position position="64"/>
    </location>
</feature>
<name>PUP_MYCVP</name>
<keyword id="KW-0175">Coiled coil</keyword>
<keyword id="KW-1017">Isopeptide bond</keyword>
<keyword id="KW-0833">Ubl conjugation pathway</keyword>
<comment type="function">
    <text evidence="1">Protein modifier that is covalently attached to lysine residues of substrate proteins, thereby targeting them for proteasomal degradation. The tagging system is termed pupylation.</text>
</comment>
<comment type="pathway">
    <text evidence="1">Protein degradation; proteasomal Pup-dependent pathway.</text>
</comment>
<comment type="subunit">
    <text evidence="1">Strongly interacts with the proteasome-associated ATPase ARC through a hydrophobic interface; the interacting region of Pup lies in its C-terminal half. There is one Pup binding site per ARC hexamer ring.</text>
</comment>
<comment type="domain">
    <text evidence="1">The N-terminal unstructured half of Pup provides a signal required to initiate unfolding and degradation by the proteasome but is not needed for pupylation, while the C-terminal helical half of Pup interacts with ARC to target proteins to the proteasome.</text>
</comment>
<comment type="PTM">
    <text evidence="1">Is modified by deamidation of its C-terminal glutamine to glutamate by the deamidase Dop, a prerequisite to the subsequent pupylation process.</text>
</comment>
<comment type="similarity">
    <text evidence="1">Belongs to the prokaryotic ubiquitin-like protein family.</text>
</comment>
<organism>
    <name type="scientific">Mycolicibacterium vanbaalenii (strain DSM 7251 / JCM 13017 / BCRC 16820 / KCTC 9966 / NRRL B-24157 / PYR-1)</name>
    <name type="common">Mycobacterium vanbaalenii</name>
    <dbReference type="NCBI Taxonomy" id="350058"/>
    <lineage>
        <taxon>Bacteria</taxon>
        <taxon>Bacillati</taxon>
        <taxon>Actinomycetota</taxon>
        <taxon>Actinomycetes</taxon>
        <taxon>Mycobacteriales</taxon>
        <taxon>Mycobacteriaceae</taxon>
        <taxon>Mycolicibacterium</taxon>
    </lineage>
</organism>
<protein>
    <recommendedName>
        <fullName evidence="1">Prokaryotic ubiquitin-like protein Pup</fullName>
    </recommendedName>
    <alternativeName>
        <fullName evidence="1">Bacterial ubiquitin-like modifier</fullName>
    </alternativeName>
</protein>